<organism>
    <name type="scientific">Flavobacterium johnsoniae (strain ATCC 17061 / DSM 2064 / JCM 8514 / BCRC 14874 / CCUG 350202 / NBRC 14942 / NCIMB 11054 / UW101)</name>
    <name type="common">Cytophaga johnsonae</name>
    <dbReference type="NCBI Taxonomy" id="376686"/>
    <lineage>
        <taxon>Bacteria</taxon>
        <taxon>Pseudomonadati</taxon>
        <taxon>Bacteroidota</taxon>
        <taxon>Flavobacteriia</taxon>
        <taxon>Flavobacteriales</taxon>
        <taxon>Flavobacteriaceae</taxon>
        <taxon>Flavobacterium</taxon>
    </lineage>
</organism>
<keyword id="KW-0067">ATP-binding</keyword>
<keyword id="KW-0963">Cytoplasm</keyword>
<keyword id="KW-0275">Fatty acid biosynthesis</keyword>
<keyword id="KW-0276">Fatty acid metabolism</keyword>
<keyword id="KW-0444">Lipid biosynthesis</keyword>
<keyword id="KW-0443">Lipid metabolism</keyword>
<keyword id="KW-0547">Nucleotide-binding</keyword>
<keyword id="KW-0808">Transferase</keyword>
<sequence length="317" mass="35855">MEYLDFELPIKELEEQLEKCVIIGKESDVDVTPTCKEINKKLEQTKKDIYKNLTAWQRVQLSRHPNRPYTLDYIKAICGDTFLELHGDRGFKDDKAMVGGLGKINGQSFMIVGQQKGYNTKTRQYRNFGMANPEGYRKALRLMKMAEKFGIPVLTLVDTPGAYPGLEAEERGQGEAIARNIFEMVRLQVPIITIIVGEGASGGALGIGVGDRVYMLENTWYSVISPESCSSILWKSWEYKERAAEALKLTSSDMKKQKLVDDVIPEPLGGAHYDRETTFKTVADYITKGYNELKDLSTADLIAQRMDKYSNMGEYKE</sequence>
<feature type="chain" id="PRO_1000083926" description="Acetyl-coenzyme A carboxylase carboxyl transferase subunit alpha">
    <location>
        <begin position="1"/>
        <end position="317"/>
    </location>
</feature>
<feature type="domain" description="CoA carboxyltransferase C-terminal" evidence="2">
    <location>
        <begin position="37"/>
        <end position="292"/>
    </location>
</feature>
<name>ACCA_FLAJ1</name>
<dbReference type="EC" id="2.1.3.15" evidence="1"/>
<dbReference type="EMBL" id="CP000685">
    <property type="protein sequence ID" value="ABQ03080.1"/>
    <property type="molecule type" value="Genomic_DNA"/>
</dbReference>
<dbReference type="RefSeq" id="WP_011921560.1">
    <property type="nucleotide sequence ID" value="NC_009441.1"/>
</dbReference>
<dbReference type="SMR" id="A5FNY7"/>
<dbReference type="STRING" id="376686.Fjoh_0042"/>
<dbReference type="KEGG" id="fjo:Fjoh_0042"/>
<dbReference type="eggNOG" id="COG0825">
    <property type="taxonomic scope" value="Bacteria"/>
</dbReference>
<dbReference type="HOGENOM" id="CLU_015486_0_2_10"/>
<dbReference type="OrthoDB" id="9808023at2"/>
<dbReference type="UniPathway" id="UPA00655">
    <property type="reaction ID" value="UER00711"/>
</dbReference>
<dbReference type="Proteomes" id="UP000006694">
    <property type="component" value="Chromosome"/>
</dbReference>
<dbReference type="GO" id="GO:0009317">
    <property type="term" value="C:acetyl-CoA carboxylase complex"/>
    <property type="evidence" value="ECO:0007669"/>
    <property type="project" value="InterPro"/>
</dbReference>
<dbReference type="GO" id="GO:0003989">
    <property type="term" value="F:acetyl-CoA carboxylase activity"/>
    <property type="evidence" value="ECO:0007669"/>
    <property type="project" value="InterPro"/>
</dbReference>
<dbReference type="GO" id="GO:0005524">
    <property type="term" value="F:ATP binding"/>
    <property type="evidence" value="ECO:0007669"/>
    <property type="project" value="UniProtKB-KW"/>
</dbReference>
<dbReference type="GO" id="GO:0016743">
    <property type="term" value="F:carboxyl- or carbamoyltransferase activity"/>
    <property type="evidence" value="ECO:0007669"/>
    <property type="project" value="UniProtKB-UniRule"/>
</dbReference>
<dbReference type="GO" id="GO:0006633">
    <property type="term" value="P:fatty acid biosynthetic process"/>
    <property type="evidence" value="ECO:0007669"/>
    <property type="project" value="UniProtKB-KW"/>
</dbReference>
<dbReference type="GO" id="GO:2001295">
    <property type="term" value="P:malonyl-CoA biosynthetic process"/>
    <property type="evidence" value="ECO:0007669"/>
    <property type="project" value="UniProtKB-UniRule"/>
</dbReference>
<dbReference type="Gene3D" id="3.90.226.10">
    <property type="entry name" value="2-enoyl-CoA Hydratase, Chain A, domain 1"/>
    <property type="match status" value="1"/>
</dbReference>
<dbReference type="HAMAP" id="MF_00823">
    <property type="entry name" value="AcetylCoA_CT_alpha"/>
    <property type="match status" value="1"/>
</dbReference>
<dbReference type="InterPro" id="IPR001095">
    <property type="entry name" value="Acetyl_CoA_COase_a_su"/>
</dbReference>
<dbReference type="InterPro" id="IPR029045">
    <property type="entry name" value="ClpP/crotonase-like_dom_sf"/>
</dbReference>
<dbReference type="InterPro" id="IPR011763">
    <property type="entry name" value="COA_CT_C"/>
</dbReference>
<dbReference type="NCBIfam" id="TIGR00513">
    <property type="entry name" value="accA"/>
    <property type="match status" value="1"/>
</dbReference>
<dbReference type="NCBIfam" id="NF041504">
    <property type="entry name" value="AccA_sub"/>
    <property type="match status" value="1"/>
</dbReference>
<dbReference type="NCBIfam" id="NF004344">
    <property type="entry name" value="PRK05724.1"/>
    <property type="match status" value="1"/>
</dbReference>
<dbReference type="PANTHER" id="PTHR42853">
    <property type="entry name" value="ACETYL-COENZYME A CARBOXYLASE CARBOXYL TRANSFERASE SUBUNIT ALPHA"/>
    <property type="match status" value="1"/>
</dbReference>
<dbReference type="PANTHER" id="PTHR42853:SF3">
    <property type="entry name" value="ACETYL-COENZYME A CARBOXYLASE CARBOXYL TRANSFERASE SUBUNIT ALPHA, CHLOROPLASTIC"/>
    <property type="match status" value="1"/>
</dbReference>
<dbReference type="Pfam" id="PF03255">
    <property type="entry name" value="ACCA"/>
    <property type="match status" value="1"/>
</dbReference>
<dbReference type="PRINTS" id="PR01069">
    <property type="entry name" value="ACCCTRFRASEA"/>
</dbReference>
<dbReference type="SUPFAM" id="SSF52096">
    <property type="entry name" value="ClpP/crotonase"/>
    <property type="match status" value="1"/>
</dbReference>
<dbReference type="PROSITE" id="PS50989">
    <property type="entry name" value="COA_CT_CTER"/>
    <property type="match status" value="1"/>
</dbReference>
<comment type="function">
    <text evidence="1">Component of the acetyl coenzyme A carboxylase (ACC) complex. First, biotin carboxylase catalyzes the carboxylation of biotin on its carrier protein (BCCP) and then the CO(2) group is transferred by the carboxyltransferase to acetyl-CoA to form malonyl-CoA.</text>
</comment>
<comment type="catalytic activity">
    <reaction evidence="1">
        <text>N(6)-carboxybiotinyl-L-lysyl-[protein] + acetyl-CoA = N(6)-biotinyl-L-lysyl-[protein] + malonyl-CoA</text>
        <dbReference type="Rhea" id="RHEA:54728"/>
        <dbReference type="Rhea" id="RHEA-COMP:10505"/>
        <dbReference type="Rhea" id="RHEA-COMP:10506"/>
        <dbReference type="ChEBI" id="CHEBI:57288"/>
        <dbReference type="ChEBI" id="CHEBI:57384"/>
        <dbReference type="ChEBI" id="CHEBI:83144"/>
        <dbReference type="ChEBI" id="CHEBI:83145"/>
        <dbReference type="EC" id="2.1.3.15"/>
    </reaction>
</comment>
<comment type="pathway">
    <text evidence="1">Lipid metabolism; malonyl-CoA biosynthesis; malonyl-CoA from acetyl-CoA: step 1/1.</text>
</comment>
<comment type="subunit">
    <text evidence="1">Acetyl-CoA carboxylase is a heterohexamer composed of biotin carboxyl carrier protein (AccB), biotin carboxylase (AccC) and two subunits each of ACCase subunit alpha (AccA) and ACCase subunit beta (AccD).</text>
</comment>
<comment type="subcellular location">
    <subcellularLocation>
        <location evidence="1">Cytoplasm</location>
    </subcellularLocation>
</comment>
<comment type="similarity">
    <text evidence="1">Belongs to the AccA family.</text>
</comment>
<evidence type="ECO:0000255" key="1">
    <source>
        <dbReference type="HAMAP-Rule" id="MF_00823"/>
    </source>
</evidence>
<evidence type="ECO:0000255" key="2">
    <source>
        <dbReference type="PROSITE-ProRule" id="PRU01137"/>
    </source>
</evidence>
<proteinExistence type="inferred from homology"/>
<accession>A5FNY7</accession>
<gene>
    <name evidence="1" type="primary">accA</name>
    <name type="ordered locus">Fjoh_0042</name>
</gene>
<reference key="1">
    <citation type="journal article" date="2009" name="Appl. Environ. Microbiol.">
        <title>Novel features of the polysaccharide-digesting gliding bacterium Flavobacterium johnsoniae as revealed by genome sequence analysis.</title>
        <authorList>
            <person name="McBride M.J."/>
            <person name="Xie G."/>
            <person name="Martens E.C."/>
            <person name="Lapidus A."/>
            <person name="Henrissat B."/>
            <person name="Rhodes R.G."/>
            <person name="Goltsman E."/>
            <person name="Wang W."/>
            <person name="Xu J."/>
            <person name="Hunnicutt D.W."/>
            <person name="Staroscik A.M."/>
            <person name="Hoover T.R."/>
            <person name="Cheng Y.Q."/>
            <person name="Stein J.L."/>
        </authorList>
    </citation>
    <scope>NUCLEOTIDE SEQUENCE [LARGE SCALE GENOMIC DNA]</scope>
    <source>
        <strain>ATCC 17061 / DSM 2064 / JCM 8514 / BCRC 14874 / CCUG 350202 / NBRC 14942 / NCIMB 11054 / UW101</strain>
    </source>
</reference>
<protein>
    <recommendedName>
        <fullName evidence="1">Acetyl-coenzyme A carboxylase carboxyl transferase subunit alpha</fullName>
        <shortName evidence="1">ACCase subunit alpha</shortName>
        <shortName evidence="1">Acetyl-CoA carboxylase carboxyltransferase subunit alpha</shortName>
        <ecNumber evidence="1">2.1.3.15</ecNumber>
    </recommendedName>
</protein>